<comment type="function">
    <text evidence="1">Co-chaperone involved in the maturation of iron-sulfur cluster-containing proteins. Seems to help targeting proteins to be folded toward HscA.</text>
</comment>
<comment type="subunit">
    <text evidence="1">Interacts with HscA and stimulates its ATPase activity.</text>
</comment>
<comment type="similarity">
    <text evidence="1">Belongs to the HscB family.</text>
</comment>
<keyword id="KW-0143">Chaperone</keyword>
<keyword id="KW-1185">Reference proteome</keyword>
<organism>
    <name type="scientific">Burkholderia pseudomallei (strain K96243)</name>
    <dbReference type="NCBI Taxonomy" id="272560"/>
    <lineage>
        <taxon>Bacteria</taxon>
        <taxon>Pseudomonadati</taxon>
        <taxon>Pseudomonadota</taxon>
        <taxon>Betaproteobacteria</taxon>
        <taxon>Burkholderiales</taxon>
        <taxon>Burkholderiaceae</taxon>
        <taxon>Burkholderia</taxon>
        <taxon>pseudomallei group</taxon>
    </lineage>
</organism>
<evidence type="ECO:0000255" key="1">
    <source>
        <dbReference type="HAMAP-Rule" id="MF_00682"/>
    </source>
</evidence>
<name>HSCB_BURPS</name>
<accession>Q63SN4</accession>
<gene>
    <name evidence="1" type="primary">hscB</name>
    <name type="ordered locus">BPSL2286</name>
</gene>
<dbReference type="EMBL" id="BX571965">
    <property type="protein sequence ID" value="CAH36289.1"/>
    <property type="molecule type" value="Genomic_DNA"/>
</dbReference>
<dbReference type="RefSeq" id="WP_004202016.1">
    <property type="nucleotide sequence ID" value="NZ_CP009538.1"/>
</dbReference>
<dbReference type="RefSeq" id="YP_108882.1">
    <property type="nucleotide sequence ID" value="NC_006350.1"/>
</dbReference>
<dbReference type="SMR" id="Q63SN4"/>
<dbReference type="STRING" id="272560.BPSL2286"/>
<dbReference type="GeneID" id="93060843"/>
<dbReference type="KEGG" id="bps:BPSL2286"/>
<dbReference type="PATRIC" id="fig|272560.51.peg.3143"/>
<dbReference type="eggNOG" id="COG1076">
    <property type="taxonomic scope" value="Bacteria"/>
</dbReference>
<dbReference type="Proteomes" id="UP000000605">
    <property type="component" value="Chromosome 1"/>
</dbReference>
<dbReference type="GO" id="GO:1990230">
    <property type="term" value="C:iron-sulfur cluster transfer complex"/>
    <property type="evidence" value="ECO:0007669"/>
    <property type="project" value="TreeGrafter"/>
</dbReference>
<dbReference type="GO" id="GO:0001671">
    <property type="term" value="F:ATPase activator activity"/>
    <property type="evidence" value="ECO:0007669"/>
    <property type="project" value="InterPro"/>
</dbReference>
<dbReference type="GO" id="GO:0051087">
    <property type="term" value="F:protein-folding chaperone binding"/>
    <property type="evidence" value="ECO:0007669"/>
    <property type="project" value="InterPro"/>
</dbReference>
<dbReference type="GO" id="GO:0044571">
    <property type="term" value="P:[2Fe-2S] cluster assembly"/>
    <property type="evidence" value="ECO:0007669"/>
    <property type="project" value="InterPro"/>
</dbReference>
<dbReference type="GO" id="GO:0051259">
    <property type="term" value="P:protein complex oligomerization"/>
    <property type="evidence" value="ECO:0007669"/>
    <property type="project" value="InterPro"/>
</dbReference>
<dbReference type="GO" id="GO:0006457">
    <property type="term" value="P:protein folding"/>
    <property type="evidence" value="ECO:0007669"/>
    <property type="project" value="UniProtKB-UniRule"/>
</dbReference>
<dbReference type="CDD" id="cd06257">
    <property type="entry name" value="DnaJ"/>
    <property type="match status" value="1"/>
</dbReference>
<dbReference type="Gene3D" id="1.10.287.110">
    <property type="entry name" value="DnaJ domain"/>
    <property type="match status" value="1"/>
</dbReference>
<dbReference type="Gene3D" id="1.20.1280.20">
    <property type="entry name" value="HscB, C-terminal domain"/>
    <property type="match status" value="1"/>
</dbReference>
<dbReference type="HAMAP" id="MF_00682">
    <property type="entry name" value="HscB"/>
    <property type="match status" value="1"/>
</dbReference>
<dbReference type="InterPro" id="IPR001623">
    <property type="entry name" value="DnaJ_domain"/>
</dbReference>
<dbReference type="InterPro" id="IPR004640">
    <property type="entry name" value="HscB"/>
</dbReference>
<dbReference type="InterPro" id="IPR036386">
    <property type="entry name" value="HscB_C_sf"/>
</dbReference>
<dbReference type="InterPro" id="IPR009073">
    <property type="entry name" value="HscB_oligo_C"/>
</dbReference>
<dbReference type="InterPro" id="IPR036869">
    <property type="entry name" value="J_dom_sf"/>
</dbReference>
<dbReference type="NCBIfam" id="TIGR00714">
    <property type="entry name" value="hscB"/>
    <property type="match status" value="1"/>
</dbReference>
<dbReference type="NCBIfam" id="NF002935">
    <property type="entry name" value="PRK03578.1"/>
    <property type="match status" value="1"/>
</dbReference>
<dbReference type="PANTHER" id="PTHR14021">
    <property type="entry name" value="IRON-SULFUR CLUSTER CO-CHAPERONE PROTEIN HSCB"/>
    <property type="match status" value="1"/>
</dbReference>
<dbReference type="PANTHER" id="PTHR14021:SF15">
    <property type="entry name" value="IRON-SULFUR CLUSTER CO-CHAPERONE PROTEIN HSCB"/>
    <property type="match status" value="1"/>
</dbReference>
<dbReference type="Pfam" id="PF07743">
    <property type="entry name" value="HSCB_C"/>
    <property type="match status" value="1"/>
</dbReference>
<dbReference type="SMART" id="SM00271">
    <property type="entry name" value="DnaJ"/>
    <property type="match status" value="1"/>
</dbReference>
<dbReference type="SUPFAM" id="SSF46565">
    <property type="entry name" value="Chaperone J-domain"/>
    <property type="match status" value="1"/>
</dbReference>
<dbReference type="SUPFAM" id="SSF47144">
    <property type="entry name" value="HSC20 (HSCB), C-terminal oligomerisation domain"/>
    <property type="match status" value="1"/>
</dbReference>
<dbReference type="PROSITE" id="PS50076">
    <property type="entry name" value="DNAJ_2"/>
    <property type="match status" value="1"/>
</dbReference>
<feature type="chain" id="PRO_0000070964" description="Co-chaperone protein HscB homolog">
    <location>
        <begin position="1"/>
        <end position="175"/>
    </location>
</feature>
<feature type="domain" description="J" evidence="1">
    <location>
        <begin position="7"/>
        <end position="79"/>
    </location>
</feature>
<sequence>MVSLKDSHFDLFHLPARFALDEPTLDAAYRAVQSQVHPDRFAAAGDAQKRIAMQWATRANEAYQTLRDPLKRATYLLHLRGVDVGAENNTAMEPAFLMQQMEWRERIEDAAGAKNVDALDALLAELRDERRARLAKLGALLDSGSDQGAAEAVRQLMFVERVSAEIGAQIERLEH</sequence>
<proteinExistence type="inferred from homology"/>
<reference key="1">
    <citation type="journal article" date="2004" name="Proc. Natl. Acad. Sci. U.S.A.">
        <title>Genomic plasticity of the causative agent of melioidosis, Burkholderia pseudomallei.</title>
        <authorList>
            <person name="Holden M.T.G."/>
            <person name="Titball R.W."/>
            <person name="Peacock S.J."/>
            <person name="Cerdeno-Tarraga A.-M."/>
            <person name="Atkins T."/>
            <person name="Crossman L.C."/>
            <person name="Pitt T."/>
            <person name="Churcher C."/>
            <person name="Mungall K.L."/>
            <person name="Bentley S.D."/>
            <person name="Sebaihia M."/>
            <person name="Thomson N.R."/>
            <person name="Bason N."/>
            <person name="Beacham I.R."/>
            <person name="Brooks K."/>
            <person name="Brown K.A."/>
            <person name="Brown N.F."/>
            <person name="Challis G.L."/>
            <person name="Cherevach I."/>
            <person name="Chillingworth T."/>
            <person name="Cronin A."/>
            <person name="Crossett B."/>
            <person name="Davis P."/>
            <person name="DeShazer D."/>
            <person name="Feltwell T."/>
            <person name="Fraser A."/>
            <person name="Hance Z."/>
            <person name="Hauser H."/>
            <person name="Holroyd S."/>
            <person name="Jagels K."/>
            <person name="Keith K.E."/>
            <person name="Maddison M."/>
            <person name="Moule S."/>
            <person name="Price C."/>
            <person name="Quail M.A."/>
            <person name="Rabbinowitsch E."/>
            <person name="Rutherford K."/>
            <person name="Sanders M."/>
            <person name="Simmonds M."/>
            <person name="Songsivilai S."/>
            <person name="Stevens K."/>
            <person name="Tumapa S."/>
            <person name="Vesaratchavest M."/>
            <person name="Whitehead S."/>
            <person name="Yeats C."/>
            <person name="Barrell B.G."/>
            <person name="Oyston P.C.F."/>
            <person name="Parkhill J."/>
        </authorList>
    </citation>
    <scope>NUCLEOTIDE SEQUENCE [LARGE SCALE GENOMIC DNA]</scope>
    <source>
        <strain>K96243</strain>
    </source>
</reference>
<protein>
    <recommendedName>
        <fullName evidence="1">Co-chaperone protein HscB homolog</fullName>
    </recommendedName>
</protein>